<comment type="function">
    <text evidence="3">Highly active against Gram-positive bacteria M.flavus strain ATCC 400, M.luteus strain CECT241, C.soprogenes strain NCTC533, L.monocytogenes strain ATCC 19111, L.inocua strain ATCC BAA-680D and S.carnosus strain LMG13564. Less active against B.cereus strain LMG13569, C.thiaminolyticum strain ATCC 15579, E.faecalis strain NCTC8176, L.lactis strain LM0230, L.casei strain ATCC 344, L.lactis strain IL1403, L.jensenii strain ATCC 25258, L.plantarum strain CECT220, L.brevis strain ATCC 8287, L.bulgaricus strain LMG13551, P.acidilactici strain ATCC 25740, P.pentosaceus strain ATCC 33316 and P.pentosaceus strain LMG13560. Weakly active against L.mesenteroides strain ATCC 19254, L.lactis strain ATCC 1454, L.sakei strain CECT906T, L.lactis subsp. cremoris strain MC1363 and L.curvatus strain ATCC 51436. Not active against Gram-negative bacterium S.enteritidis strain ATCC 13076. The mode of action appears to be non-lytic. Inactivated by proteinase K, but insensitive to trypsin, alpha-chymotrypsin, pepsin and papain.</text>
</comment>
<comment type="biophysicochemical properties">
    <phDependence>
        <text evidence="3">Remains active between pH 2 and 10.</text>
    </phDependence>
    <temperatureDependence>
        <text evidence="3">Remains active after incubation at 121 degrees Celsius for 1 hour.</text>
    </temperatureDependence>
</comment>
<comment type="subcellular location">
    <subcellularLocation>
        <location evidence="3">Secreted</location>
    </subcellularLocation>
    <text evidence="3">Partly adsorbed to cell wall.</text>
</comment>
<comment type="mass spectrometry" mass="4450.0" method="Electrospray" evidence="3"/>
<comment type="similarity">
    <text evidence="2">Belongs to the bacteriocin class IIA/YGNGV family.</text>
</comment>
<sequence length="43" mass="4449">KNYGNGVYCNKHKCSVDWATFSANIANNSVAMAGLTGGNAGNK</sequence>
<reference evidence="5" key="1">
    <citation type="journal article" date="2011" name="Bioresour. Technol.">
        <title>Purification, amino acid sequence and characterization of the class IIa bacteriocin weissellin A, produced by Weissella paramesenteroides DX.</title>
        <authorList>
            <person name="Papagianni M."/>
            <person name="Papamichael E.M."/>
        </authorList>
    </citation>
    <scope>PROTEIN SEQUENCE</scope>
    <scope>FUNCTION</scope>
    <scope>BIOPHYSICOCHEMICAL PROPERTIES</scope>
    <scope>SUBCELLULAR LOCATION</scope>
    <scope>MASS SPECTROMETRY</scope>
    <source>
        <strain evidence="3">DX</strain>
    </source>
</reference>
<protein>
    <recommendedName>
        <fullName evidence="4">Bacteriocin weissellin-A</fullName>
    </recommendedName>
</protein>
<accession>B3A0N4</accession>
<feature type="chain" id="PRO_0000414627" description="Bacteriocin weissellin-A">
    <location>
        <begin position="1"/>
        <end position="43" status="greater than"/>
    </location>
</feature>
<feature type="disulfide bond" evidence="1">
    <location>
        <begin position="9"/>
        <end position="14"/>
    </location>
</feature>
<feature type="non-terminal residue" evidence="4">
    <location>
        <position position="43"/>
    </location>
</feature>
<proteinExistence type="evidence at protein level"/>
<keyword id="KW-0044">Antibiotic</keyword>
<keyword id="KW-0929">Antimicrobial</keyword>
<keyword id="KW-0078">Bacteriocin</keyword>
<keyword id="KW-0903">Direct protein sequencing</keyword>
<keyword id="KW-1015">Disulfide bond</keyword>
<keyword id="KW-0964">Secreted</keyword>
<organism>
    <name type="scientific">Weissella paramesenteroides</name>
    <name type="common">Leuconostoc paramesenteroides</name>
    <dbReference type="NCBI Taxonomy" id="1249"/>
    <lineage>
        <taxon>Bacteria</taxon>
        <taxon>Bacillati</taxon>
        <taxon>Bacillota</taxon>
        <taxon>Bacilli</taxon>
        <taxon>Lactobacillales</taxon>
        <taxon>Lactobacillaceae</taxon>
        <taxon>Weissella</taxon>
    </lineage>
</organism>
<name>WSNA_WEIPA</name>
<dbReference type="SMR" id="B3A0N4"/>
<dbReference type="GO" id="GO:0005576">
    <property type="term" value="C:extracellular region"/>
    <property type="evidence" value="ECO:0000314"/>
    <property type="project" value="UniProtKB"/>
</dbReference>
<dbReference type="GO" id="GO:0050830">
    <property type="term" value="P:defense response to Gram-positive bacterium"/>
    <property type="evidence" value="ECO:0000314"/>
    <property type="project" value="UniProtKB"/>
</dbReference>
<dbReference type="GO" id="GO:0031640">
    <property type="term" value="P:killing of cells of another organism"/>
    <property type="evidence" value="ECO:0007669"/>
    <property type="project" value="UniProtKB-KW"/>
</dbReference>
<dbReference type="Gene3D" id="1.20.5.130">
    <property type="match status" value="1"/>
</dbReference>
<dbReference type="InterPro" id="IPR002633">
    <property type="entry name" value="Bacteriocin_IIa"/>
</dbReference>
<dbReference type="InterPro" id="IPR023384">
    <property type="entry name" value="Bacteriocin_IIa_CS"/>
</dbReference>
<dbReference type="InterPro" id="IPR023388">
    <property type="entry name" value="Bacteriocin_IIa_dom_sf"/>
</dbReference>
<dbReference type="Pfam" id="PF01721">
    <property type="entry name" value="Bacteriocin_II"/>
    <property type="match status" value="1"/>
</dbReference>
<dbReference type="PROSITE" id="PS60030">
    <property type="entry name" value="BACTERIOCIN_IIA"/>
    <property type="match status" value="1"/>
</dbReference>
<evidence type="ECO:0000250" key="1">
    <source>
        <dbReference type="UniProtKB" id="P29430"/>
    </source>
</evidence>
<evidence type="ECO:0000255" key="2"/>
<evidence type="ECO:0000269" key="3">
    <source>
    </source>
</evidence>
<evidence type="ECO:0000303" key="4">
    <source>
    </source>
</evidence>
<evidence type="ECO:0000305" key="5"/>